<evidence type="ECO:0000255" key="1">
    <source>
        <dbReference type="HAMAP-Rule" id="MF_00113"/>
    </source>
</evidence>
<feature type="chain" id="PRO_0000231329" description="S-adenosylmethionine:tRNA ribosyltransferase-isomerase">
    <location>
        <begin position="1"/>
        <end position="359"/>
    </location>
</feature>
<keyword id="KW-0963">Cytoplasm</keyword>
<keyword id="KW-0671">Queuosine biosynthesis</keyword>
<keyword id="KW-0949">S-adenosyl-L-methionine</keyword>
<keyword id="KW-0808">Transferase</keyword>
<proteinExistence type="inferred from homology"/>
<dbReference type="EC" id="2.4.99.17" evidence="1"/>
<dbReference type="EMBL" id="CP000083">
    <property type="protein sequence ID" value="AAZ28135.1"/>
    <property type="molecule type" value="Genomic_DNA"/>
</dbReference>
<dbReference type="RefSeq" id="WP_011041956.1">
    <property type="nucleotide sequence ID" value="NC_003910.7"/>
</dbReference>
<dbReference type="SMR" id="Q487A3"/>
<dbReference type="STRING" id="167879.CPS_1119"/>
<dbReference type="KEGG" id="cps:CPS_1119"/>
<dbReference type="eggNOG" id="COG0809">
    <property type="taxonomic scope" value="Bacteria"/>
</dbReference>
<dbReference type="HOGENOM" id="CLU_039110_1_0_6"/>
<dbReference type="UniPathway" id="UPA00392"/>
<dbReference type="Proteomes" id="UP000000547">
    <property type="component" value="Chromosome"/>
</dbReference>
<dbReference type="GO" id="GO:0005737">
    <property type="term" value="C:cytoplasm"/>
    <property type="evidence" value="ECO:0007669"/>
    <property type="project" value="UniProtKB-SubCell"/>
</dbReference>
<dbReference type="GO" id="GO:0051075">
    <property type="term" value="F:S-adenosylmethionine:tRNA ribosyltransferase-isomerase activity"/>
    <property type="evidence" value="ECO:0007669"/>
    <property type="project" value="UniProtKB-EC"/>
</dbReference>
<dbReference type="GO" id="GO:0008616">
    <property type="term" value="P:queuosine biosynthetic process"/>
    <property type="evidence" value="ECO:0007669"/>
    <property type="project" value="UniProtKB-UniRule"/>
</dbReference>
<dbReference type="GO" id="GO:0002099">
    <property type="term" value="P:tRNA wobble guanine modification"/>
    <property type="evidence" value="ECO:0007669"/>
    <property type="project" value="TreeGrafter"/>
</dbReference>
<dbReference type="FunFam" id="2.40.10.240:FF:000001">
    <property type="entry name" value="S-adenosylmethionine:tRNA ribosyltransferase-isomerase"/>
    <property type="match status" value="1"/>
</dbReference>
<dbReference type="FunFam" id="3.40.1780.10:FF:000001">
    <property type="entry name" value="S-adenosylmethionine:tRNA ribosyltransferase-isomerase"/>
    <property type="match status" value="1"/>
</dbReference>
<dbReference type="Gene3D" id="2.40.10.240">
    <property type="entry name" value="QueA-like"/>
    <property type="match status" value="1"/>
</dbReference>
<dbReference type="Gene3D" id="3.40.1780.10">
    <property type="entry name" value="QueA-like"/>
    <property type="match status" value="1"/>
</dbReference>
<dbReference type="HAMAP" id="MF_00113">
    <property type="entry name" value="QueA"/>
    <property type="match status" value="1"/>
</dbReference>
<dbReference type="InterPro" id="IPR003699">
    <property type="entry name" value="QueA"/>
</dbReference>
<dbReference type="InterPro" id="IPR042118">
    <property type="entry name" value="QueA_dom1"/>
</dbReference>
<dbReference type="InterPro" id="IPR042119">
    <property type="entry name" value="QueA_dom2"/>
</dbReference>
<dbReference type="InterPro" id="IPR036100">
    <property type="entry name" value="QueA_sf"/>
</dbReference>
<dbReference type="NCBIfam" id="NF001140">
    <property type="entry name" value="PRK00147.1"/>
    <property type="match status" value="1"/>
</dbReference>
<dbReference type="NCBIfam" id="TIGR00113">
    <property type="entry name" value="queA"/>
    <property type="match status" value="1"/>
</dbReference>
<dbReference type="PANTHER" id="PTHR30307">
    <property type="entry name" value="S-ADENOSYLMETHIONINE:TRNA RIBOSYLTRANSFERASE-ISOMERASE"/>
    <property type="match status" value="1"/>
</dbReference>
<dbReference type="PANTHER" id="PTHR30307:SF0">
    <property type="entry name" value="S-ADENOSYLMETHIONINE:TRNA RIBOSYLTRANSFERASE-ISOMERASE"/>
    <property type="match status" value="1"/>
</dbReference>
<dbReference type="Pfam" id="PF02547">
    <property type="entry name" value="Queuosine_synth"/>
    <property type="match status" value="1"/>
</dbReference>
<dbReference type="SUPFAM" id="SSF111337">
    <property type="entry name" value="QueA-like"/>
    <property type="match status" value="1"/>
</dbReference>
<organism>
    <name type="scientific">Colwellia psychrerythraea (strain 34H / ATCC BAA-681)</name>
    <name type="common">Vibrio psychroerythus</name>
    <dbReference type="NCBI Taxonomy" id="167879"/>
    <lineage>
        <taxon>Bacteria</taxon>
        <taxon>Pseudomonadati</taxon>
        <taxon>Pseudomonadota</taxon>
        <taxon>Gammaproteobacteria</taxon>
        <taxon>Alteromonadales</taxon>
        <taxon>Colwelliaceae</taxon>
        <taxon>Colwellia</taxon>
    </lineage>
</organism>
<accession>Q487A3</accession>
<protein>
    <recommendedName>
        <fullName evidence="1">S-adenosylmethionine:tRNA ribosyltransferase-isomerase</fullName>
        <ecNumber evidence="1">2.4.99.17</ecNumber>
    </recommendedName>
    <alternativeName>
        <fullName evidence="1">Queuosine biosynthesis protein QueA</fullName>
    </alternativeName>
</protein>
<name>QUEA_COLP3</name>
<comment type="function">
    <text evidence="1">Transfers and isomerizes the ribose moiety from AdoMet to the 7-aminomethyl group of 7-deazaguanine (preQ1-tRNA) to give epoxyqueuosine (oQ-tRNA).</text>
</comment>
<comment type="catalytic activity">
    <reaction evidence="1">
        <text>7-aminomethyl-7-carbaguanosine(34) in tRNA + S-adenosyl-L-methionine = epoxyqueuosine(34) in tRNA + adenine + L-methionine + 2 H(+)</text>
        <dbReference type="Rhea" id="RHEA:32155"/>
        <dbReference type="Rhea" id="RHEA-COMP:10342"/>
        <dbReference type="Rhea" id="RHEA-COMP:18582"/>
        <dbReference type="ChEBI" id="CHEBI:15378"/>
        <dbReference type="ChEBI" id="CHEBI:16708"/>
        <dbReference type="ChEBI" id="CHEBI:57844"/>
        <dbReference type="ChEBI" id="CHEBI:59789"/>
        <dbReference type="ChEBI" id="CHEBI:82833"/>
        <dbReference type="ChEBI" id="CHEBI:194443"/>
        <dbReference type="EC" id="2.4.99.17"/>
    </reaction>
</comment>
<comment type="pathway">
    <text evidence="1">tRNA modification; tRNA-queuosine biosynthesis.</text>
</comment>
<comment type="subunit">
    <text evidence="1">Monomer.</text>
</comment>
<comment type="subcellular location">
    <subcellularLocation>
        <location evidence="1">Cytoplasm</location>
    </subcellularLocation>
</comment>
<comment type="similarity">
    <text evidence="1">Belongs to the QueA family.</text>
</comment>
<reference key="1">
    <citation type="journal article" date="2005" name="Proc. Natl. Acad. Sci. U.S.A.">
        <title>The psychrophilic lifestyle as revealed by the genome sequence of Colwellia psychrerythraea 34H through genomic and proteomic analyses.</title>
        <authorList>
            <person name="Methe B.A."/>
            <person name="Nelson K.E."/>
            <person name="Deming J.W."/>
            <person name="Momen B."/>
            <person name="Melamud E."/>
            <person name="Zhang X."/>
            <person name="Moult J."/>
            <person name="Madupu R."/>
            <person name="Nelson W.C."/>
            <person name="Dodson R.J."/>
            <person name="Brinkac L.M."/>
            <person name="Daugherty S.C."/>
            <person name="Durkin A.S."/>
            <person name="DeBoy R.T."/>
            <person name="Kolonay J.F."/>
            <person name="Sullivan S.A."/>
            <person name="Zhou L."/>
            <person name="Davidsen T.M."/>
            <person name="Wu M."/>
            <person name="Huston A.L."/>
            <person name="Lewis M."/>
            <person name="Weaver B."/>
            <person name="Weidman J.F."/>
            <person name="Khouri H."/>
            <person name="Utterback T.R."/>
            <person name="Feldblyum T.V."/>
            <person name="Fraser C.M."/>
        </authorList>
    </citation>
    <scope>NUCLEOTIDE SEQUENCE [LARGE SCALE GENOMIC DNA]</scope>
    <source>
        <strain>34H / ATCC BAA-681</strain>
    </source>
</reference>
<gene>
    <name evidence="1" type="primary">queA</name>
    <name type="ordered locus">CPS_1119</name>
</gene>
<sequence length="359" mass="39276">MRVSDFSFDLPEALIARYPKAERTASRLMTLNGNSGAITDGVFTDIVAQLNSGDLLVFNNTRVIPARMFGQKASGGKIEVLVERVIDQNTALAHIRASKSPKVGNELFLGNEDSDVKVKATMVARHGALFELKFNSDESVLTILDKIGHMPLPPYIDRPDEDSDKERYQTVYNEKPGAVAAPTAGLHFDEALLERIKAKGVELAFVTLHVGAGTFQPVKVDEIADHIMHAEYVEVSDEVVAQIAKTKAAGGRVVAVGTTSVRSLESAAKAALDKNKPLSAFYGDTDIFITPGCQFQIIDALVTNFHLSESTLLMLVSAFSGYDHIMSAYQHAISQEYRFFSYGDAMFLTKQELIKQDTP</sequence>